<sequence>MSTEKINLDIHKILTLLPHRYPILLVDRVLELEPHKGIKALKNVSINEPFFQGHFPKRPVMPGVLILEALAQAAALLTFAEEQPKDPENTLYYFVGIDGARFKRVVEPGDQLILNVTFERYIRGIWKFKAVAEVDGKVAAEAELMCTVKTADAAP</sequence>
<proteinExistence type="inferred from homology"/>
<feature type="chain" id="PRO_1000197281" description="3-hydroxyacyl-[acyl-carrier-protein] dehydratase FabZ">
    <location>
        <begin position="1"/>
        <end position="155"/>
    </location>
</feature>
<feature type="active site" evidence="1">
    <location>
        <position position="54"/>
    </location>
</feature>
<organism>
    <name type="scientific">Burkholderia ambifaria (strain MC40-6)</name>
    <dbReference type="NCBI Taxonomy" id="398577"/>
    <lineage>
        <taxon>Bacteria</taxon>
        <taxon>Pseudomonadati</taxon>
        <taxon>Pseudomonadota</taxon>
        <taxon>Betaproteobacteria</taxon>
        <taxon>Burkholderiales</taxon>
        <taxon>Burkholderiaceae</taxon>
        <taxon>Burkholderia</taxon>
        <taxon>Burkholderia cepacia complex</taxon>
    </lineage>
</organism>
<reference key="1">
    <citation type="submission" date="2008-04" db="EMBL/GenBank/DDBJ databases">
        <title>Complete sequence of chromosome 1 of Burkholderia ambifaria MC40-6.</title>
        <authorList>
            <person name="Copeland A."/>
            <person name="Lucas S."/>
            <person name="Lapidus A."/>
            <person name="Glavina del Rio T."/>
            <person name="Dalin E."/>
            <person name="Tice H."/>
            <person name="Pitluck S."/>
            <person name="Chain P."/>
            <person name="Malfatti S."/>
            <person name="Shin M."/>
            <person name="Vergez L."/>
            <person name="Lang D."/>
            <person name="Schmutz J."/>
            <person name="Larimer F."/>
            <person name="Land M."/>
            <person name="Hauser L."/>
            <person name="Kyrpides N."/>
            <person name="Lykidis A."/>
            <person name="Ramette A."/>
            <person name="Konstantinidis K."/>
            <person name="Tiedje J."/>
            <person name="Richardson P."/>
        </authorList>
    </citation>
    <scope>NUCLEOTIDE SEQUENCE [LARGE SCALE GENOMIC DNA]</scope>
    <source>
        <strain>MC40-6</strain>
    </source>
</reference>
<name>FABZ_BURA4</name>
<gene>
    <name evidence="1" type="primary">fabZ</name>
    <name type="ordered locus">BamMC406_1910</name>
</gene>
<protein>
    <recommendedName>
        <fullName evidence="1">3-hydroxyacyl-[acyl-carrier-protein] dehydratase FabZ</fullName>
        <ecNumber evidence="1">4.2.1.59</ecNumber>
    </recommendedName>
    <alternativeName>
        <fullName evidence="1">(3R)-hydroxymyristoyl-[acyl-carrier-protein] dehydratase</fullName>
        <shortName evidence="1">(3R)-hydroxymyristoyl-ACP dehydrase</shortName>
    </alternativeName>
    <alternativeName>
        <fullName evidence="1">Beta-hydroxyacyl-ACP dehydratase</fullName>
    </alternativeName>
</protein>
<keyword id="KW-0963">Cytoplasm</keyword>
<keyword id="KW-0441">Lipid A biosynthesis</keyword>
<keyword id="KW-0444">Lipid biosynthesis</keyword>
<keyword id="KW-0443">Lipid metabolism</keyword>
<keyword id="KW-0456">Lyase</keyword>
<comment type="function">
    <text evidence="1">Involved in unsaturated fatty acids biosynthesis. Catalyzes the dehydration of short chain beta-hydroxyacyl-ACPs and long chain saturated and unsaturated beta-hydroxyacyl-ACPs.</text>
</comment>
<comment type="catalytic activity">
    <reaction evidence="1">
        <text>a (3R)-hydroxyacyl-[ACP] = a (2E)-enoyl-[ACP] + H2O</text>
        <dbReference type="Rhea" id="RHEA:13097"/>
        <dbReference type="Rhea" id="RHEA-COMP:9925"/>
        <dbReference type="Rhea" id="RHEA-COMP:9945"/>
        <dbReference type="ChEBI" id="CHEBI:15377"/>
        <dbReference type="ChEBI" id="CHEBI:78784"/>
        <dbReference type="ChEBI" id="CHEBI:78827"/>
        <dbReference type="EC" id="4.2.1.59"/>
    </reaction>
</comment>
<comment type="subcellular location">
    <subcellularLocation>
        <location evidence="1">Cytoplasm</location>
    </subcellularLocation>
</comment>
<comment type="similarity">
    <text evidence="1">Belongs to the thioester dehydratase family. FabZ subfamily.</text>
</comment>
<accession>B1YS63</accession>
<dbReference type="EC" id="4.2.1.59" evidence="1"/>
<dbReference type="EMBL" id="CP001025">
    <property type="protein sequence ID" value="ACB64392.1"/>
    <property type="molecule type" value="Genomic_DNA"/>
</dbReference>
<dbReference type="RefSeq" id="WP_006495559.1">
    <property type="nucleotide sequence ID" value="NC_010551.1"/>
</dbReference>
<dbReference type="SMR" id="B1YS63"/>
<dbReference type="GeneID" id="98105474"/>
<dbReference type="KEGG" id="bac:BamMC406_1910"/>
<dbReference type="HOGENOM" id="CLU_078912_1_0_4"/>
<dbReference type="OrthoDB" id="9772788at2"/>
<dbReference type="Proteomes" id="UP000001680">
    <property type="component" value="Chromosome 1"/>
</dbReference>
<dbReference type="GO" id="GO:0005737">
    <property type="term" value="C:cytoplasm"/>
    <property type="evidence" value="ECO:0007669"/>
    <property type="project" value="UniProtKB-SubCell"/>
</dbReference>
<dbReference type="GO" id="GO:0016020">
    <property type="term" value="C:membrane"/>
    <property type="evidence" value="ECO:0007669"/>
    <property type="project" value="GOC"/>
</dbReference>
<dbReference type="GO" id="GO:0019171">
    <property type="term" value="F:(3R)-hydroxyacyl-[acyl-carrier-protein] dehydratase activity"/>
    <property type="evidence" value="ECO:0007669"/>
    <property type="project" value="UniProtKB-EC"/>
</dbReference>
<dbReference type="GO" id="GO:0006633">
    <property type="term" value="P:fatty acid biosynthetic process"/>
    <property type="evidence" value="ECO:0007669"/>
    <property type="project" value="UniProtKB-UniRule"/>
</dbReference>
<dbReference type="GO" id="GO:0009245">
    <property type="term" value="P:lipid A biosynthetic process"/>
    <property type="evidence" value="ECO:0007669"/>
    <property type="project" value="UniProtKB-UniRule"/>
</dbReference>
<dbReference type="CDD" id="cd01288">
    <property type="entry name" value="FabZ"/>
    <property type="match status" value="1"/>
</dbReference>
<dbReference type="FunFam" id="3.10.129.10:FF:000001">
    <property type="entry name" value="3-hydroxyacyl-[acyl-carrier-protein] dehydratase FabZ"/>
    <property type="match status" value="1"/>
</dbReference>
<dbReference type="Gene3D" id="3.10.129.10">
    <property type="entry name" value="Hotdog Thioesterase"/>
    <property type="match status" value="1"/>
</dbReference>
<dbReference type="HAMAP" id="MF_00406">
    <property type="entry name" value="FabZ"/>
    <property type="match status" value="1"/>
</dbReference>
<dbReference type="InterPro" id="IPR013114">
    <property type="entry name" value="FabA_FabZ"/>
</dbReference>
<dbReference type="InterPro" id="IPR010084">
    <property type="entry name" value="FabZ"/>
</dbReference>
<dbReference type="InterPro" id="IPR029069">
    <property type="entry name" value="HotDog_dom_sf"/>
</dbReference>
<dbReference type="NCBIfam" id="TIGR01750">
    <property type="entry name" value="fabZ"/>
    <property type="match status" value="1"/>
</dbReference>
<dbReference type="NCBIfam" id="NF000582">
    <property type="entry name" value="PRK00006.1"/>
    <property type="match status" value="1"/>
</dbReference>
<dbReference type="PANTHER" id="PTHR30272">
    <property type="entry name" value="3-HYDROXYACYL-[ACYL-CARRIER-PROTEIN] DEHYDRATASE"/>
    <property type="match status" value="1"/>
</dbReference>
<dbReference type="PANTHER" id="PTHR30272:SF1">
    <property type="entry name" value="3-HYDROXYACYL-[ACYL-CARRIER-PROTEIN] DEHYDRATASE"/>
    <property type="match status" value="1"/>
</dbReference>
<dbReference type="Pfam" id="PF07977">
    <property type="entry name" value="FabA"/>
    <property type="match status" value="1"/>
</dbReference>
<dbReference type="SUPFAM" id="SSF54637">
    <property type="entry name" value="Thioesterase/thiol ester dehydrase-isomerase"/>
    <property type="match status" value="1"/>
</dbReference>
<evidence type="ECO:0000255" key="1">
    <source>
        <dbReference type="HAMAP-Rule" id="MF_00406"/>
    </source>
</evidence>